<gene>
    <name evidence="1" type="primary">maeA</name>
    <name type="ordered locus">PMI0642</name>
</gene>
<keyword id="KW-0479">Metal-binding</keyword>
<keyword id="KW-0520">NAD</keyword>
<keyword id="KW-0560">Oxidoreductase</keyword>
<keyword id="KW-1185">Reference proteome</keyword>
<dbReference type="EC" id="1.1.1.38" evidence="1"/>
<dbReference type="EMBL" id="AM942759">
    <property type="protein sequence ID" value="CAR41518.1"/>
    <property type="molecule type" value="Genomic_DNA"/>
</dbReference>
<dbReference type="RefSeq" id="WP_004244507.1">
    <property type="nucleotide sequence ID" value="NC_010554.1"/>
</dbReference>
<dbReference type="SMR" id="B4ESY2"/>
<dbReference type="EnsemblBacteria" id="CAR41518">
    <property type="protein sequence ID" value="CAR41518"/>
    <property type="gene ID" value="PMI0642"/>
</dbReference>
<dbReference type="GeneID" id="6800012"/>
<dbReference type="KEGG" id="pmr:PMI0642"/>
<dbReference type="eggNOG" id="COG0281">
    <property type="taxonomic scope" value="Bacteria"/>
</dbReference>
<dbReference type="HOGENOM" id="CLU_011405_5_2_6"/>
<dbReference type="Proteomes" id="UP000008319">
    <property type="component" value="Chromosome"/>
</dbReference>
<dbReference type="GO" id="GO:0005829">
    <property type="term" value="C:cytosol"/>
    <property type="evidence" value="ECO:0007669"/>
    <property type="project" value="TreeGrafter"/>
</dbReference>
<dbReference type="GO" id="GO:0004471">
    <property type="term" value="F:malate dehydrogenase (decarboxylating) (NAD+) activity"/>
    <property type="evidence" value="ECO:0007669"/>
    <property type="project" value="UniProtKB-UniRule"/>
</dbReference>
<dbReference type="GO" id="GO:0046872">
    <property type="term" value="F:metal ion binding"/>
    <property type="evidence" value="ECO:0007669"/>
    <property type="project" value="UniProtKB-KW"/>
</dbReference>
<dbReference type="GO" id="GO:0051287">
    <property type="term" value="F:NAD binding"/>
    <property type="evidence" value="ECO:0007669"/>
    <property type="project" value="InterPro"/>
</dbReference>
<dbReference type="GO" id="GO:0008948">
    <property type="term" value="F:oxaloacetate decarboxylase activity"/>
    <property type="evidence" value="ECO:0007669"/>
    <property type="project" value="UniProtKB-UniRule"/>
</dbReference>
<dbReference type="GO" id="GO:0006108">
    <property type="term" value="P:malate metabolic process"/>
    <property type="evidence" value="ECO:0007669"/>
    <property type="project" value="TreeGrafter"/>
</dbReference>
<dbReference type="CDD" id="cd05312">
    <property type="entry name" value="NAD_bind_1_malic_enz"/>
    <property type="match status" value="1"/>
</dbReference>
<dbReference type="FunFam" id="3.40.50.10380:FF:000001">
    <property type="entry name" value="NAD-dependent malic enzyme"/>
    <property type="match status" value="1"/>
</dbReference>
<dbReference type="FunFam" id="3.40.50.720:FF:000055">
    <property type="entry name" value="NAD-dependent malic enzyme"/>
    <property type="match status" value="1"/>
</dbReference>
<dbReference type="Gene3D" id="3.40.50.10380">
    <property type="entry name" value="Malic enzyme, N-terminal domain"/>
    <property type="match status" value="1"/>
</dbReference>
<dbReference type="Gene3D" id="3.40.50.720">
    <property type="entry name" value="NAD(P)-binding Rossmann-like Domain"/>
    <property type="match status" value="1"/>
</dbReference>
<dbReference type="HAMAP" id="MF_01619">
    <property type="entry name" value="NAD_malic_enz"/>
    <property type="match status" value="1"/>
</dbReference>
<dbReference type="InterPro" id="IPR046346">
    <property type="entry name" value="Aminoacid_DH-like_N_sf"/>
</dbReference>
<dbReference type="InterPro" id="IPR015884">
    <property type="entry name" value="Malic_enzyme_CS"/>
</dbReference>
<dbReference type="InterPro" id="IPR012301">
    <property type="entry name" value="Malic_N_dom"/>
</dbReference>
<dbReference type="InterPro" id="IPR037062">
    <property type="entry name" value="Malic_N_dom_sf"/>
</dbReference>
<dbReference type="InterPro" id="IPR012302">
    <property type="entry name" value="Malic_NAD-bd"/>
</dbReference>
<dbReference type="InterPro" id="IPR001891">
    <property type="entry name" value="Malic_OxRdtase"/>
</dbReference>
<dbReference type="InterPro" id="IPR036291">
    <property type="entry name" value="NAD(P)-bd_dom_sf"/>
</dbReference>
<dbReference type="InterPro" id="IPR023667">
    <property type="entry name" value="NAD_malic_enz_proteobac"/>
</dbReference>
<dbReference type="NCBIfam" id="NF010052">
    <property type="entry name" value="PRK13529.1"/>
    <property type="match status" value="1"/>
</dbReference>
<dbReference type="PANTHER" id="PTHR23406">
    <property type="entry name" value="MALIC ENZYME-RELATED"/>
    <property type="match status" value="1"/>
</dbReference>
<dbReference type="PANTHER" id="PTHR23406:SF34">
    <property type="entry name" value="NAD-DEPENDENT MALIC ENZYME, MITOCHONDRIAL"/>
    <property type="match status" value="1"/>
</dbReference>
<dbReference type="Pfam" id="PF00390">
    <property type="entry name" value="malic"/>
    <property type="match status" value="1"/>
</dbReference>
<dbReference type="Pfam" id="PF03949">
    <property type="entry name" value="Malic_M"/>
    <property type="match status" value="1"/>
</dbReference>
<dbReference type="PIRSF" id="PIRSF000106">
    <property type="entry name" value="ME"/>
    <property type="match status" value="1"/>
</dbReference>
<dbReference type="PRINTS" id="PR00072">
    <property type="entry name" value="MALOXRDTASE"/>
</dbReference>
<dbReference type="SMART" id="SM01274">
    <property type="entry name" value="malic"/>
    <property type="match status" value="1"/>
</dbReference>
<dbReference type="SMART" id="SM00919">
    <property type="entry name" value="Malic_M"/>
    <property type="match status" value="1"/>
</dbReference>
<dbReference type="SUPFAM" id="SSF53223">
    <property type="entry name" value="Aminoacid dehydrogenase-like, N-terminal domain"/>
    <property type="match status" value="1"/>
</dbReference>
<dbReference type="SUPFAM" id="SSF51735">
    <property type="entry name" value="NAD(P)-binding Rossmann-fold domains"/>
    <property type="match status" value="1"/>
</dbReference>
<dbReference type="PROSITE" id="PS00331">
    <property type="entry name" value="MALIC_ENZYMES"/>
    <property type="match status" value="1"/>
</dbReference>
<feature type="chain" id="PRO_1000186001" description="NAD-dependent malic enzyme">
    <location>
        <begin position="1"/>
        <end position="565"/>
    </location>
</feature>
<feature type="active site" description="Proton donor" evidence="1">
    <location>
        <position position="104"/>
    </location>
</feature>
<feature type="active site" description="Proton acceptor" evidence="1">
    <location>
        <position position="175"/>
    </location>
</feature>
<feature type="binding site" evidence="1">
    <location>
        <position position="157"/>
    </location>
    <ligand>
        <name>NAD(+)</name>
        <dbReference type="ChEBI" id="CHEBI:57540"/>
    </ligand>
</feature>
<feature type="binding site" evidence="1">
    <location>
        <position position="246"/>
    </location>
    <ligand>
        <name>a divalent metal cation</name>
        <dbReference type="ChEBI" id="CHEBI:60240"/>
    </ligand>
</feature>
<feature type="binding site" evidence="1">
    <location>
        <position position="247"/>
    </location>
    <ligand>
        <name>a divalent metal cation</name>
        <dbReference type="ChEBI" id="CHEBI:60240"/>
    </ligand>
</feature>
<feature type="binding site" evidence="1">
    <location>
        <position position="270"/>
    </location>
    <ligand>
        <name>a divalent metal cation</name>
        <dbReference type="ChEBI" id="CHEBI:60240"/>
    </ligand>
</feature>
<feature type="binding site" evidence="1">
    <location>
        <position position="270"/>
    </location>
    <ligand>
        <name>NAD(+)</name>
        <dbReference type="ChEBI" id="CHEBI:57540"/>
    </ligand>
</feature>
<feature type="binding site" evidence="1">
    <location>
        <position position="418"/>
    </location>
    <ligand>
        <name>NAD(+)</name>
        <dbReference type="ChEBI" id="CHEBI:57540"/>
    </ligand>
</feature>
<feature type="site" description="Important for activity" evidence="1">
    <location>
        <position position="270"/>
    </location>
</feature>
<proteinExistence type="inferred from homology"/>
<accession>B4ESY2</accession>
<comment type="catalytic activity">
    <reaction evidence="1">
        <text>(S)-malate + NAD(+) = pyruvate + CO2 + NADH</text>
        <dbReference type="Rhea" id="RHEA:12653"/>
        <dbReference type="ChEBI" id="CHEBI:15361"/>
        <dbReference type="ChEBI" id="CHEBI:15589"/>
        <dbReference type="ChEBI" id="CHEBI:16526"/>
        <dbReference type="ChEBI" id="CHEBI:57540"/>
        <dbReference type="ChEBI" id="CHEBI:57945"/>
        <dbReference type="EC" id="1.1.1.38"/>
    </reaction>
</comment>
<comment type="catalytic activity">
    <reaction evidence="1">
        <text>oxaloacetate + H(+) = pyruvate + CO2</text>
        <dbReference type="Rhea" id="RHEA:15641"/>
        <dbReference type="ChEBI" id="CHEBI:15361"/>
        <dbReference type="ChEBI" id="CHEBI:15378"/>
        <dbReference type="ChEBI" id="CHEBI:16452"/>
        <dbReference type="ChEBI" id="CHEBI:16526"/>
        <dbReference type="EC" id="1.1.1.38"/>
    </reaction>
</comment>
<comment type="cofactor">
    <cofactor evidence="1">
        <name>Mg(2+)</name>
        <dbReference type="ChEBI" id="CHEBI:18420"/>
    </cofactor>
    <cofactor evidence="1">
        <name>Mn(2+)</name>
        <dbReference type="ChEBI" id="CHEBI:29035"/>
    </cofactor>
    <text evidence="1">Divalent metal cations. Prefers magnesium or manganese.</text>
</comment>
<comment type="subunit">
    <text evidence="1">Homotetramer.</text>
</comment>
<comment type="similarity">
    <text evidence="1">Belongs to the malic enzymes family.</text>
</comment>
<evidence type="ECO:0000255" key="1">
    <source>
        <dbReference type="HAMAP-Rule" id="MF_01619"/>
    </source>
</evidence>
<protein>
    <recommendedName>
        <fullName evidence="1">NAD-dependent malic enzyme</fullName>
        <shortName evidence="1">NAD-ME</shortName>
        <ecNumber evidence="1">1.1.1.38</ecNumber>
    </recommendedName>
</protein>
<organism>
    <name type="scientific">Proteus mirabilis (strain HI4320)</name>
    <dbReference type="NCBI Taxonomy" id="529507"/>
    <lineage>
        <taxon>Bacteria</taxon>
        <taxon>Pseudomonadati</taxon>
        <taxon>Pseudomonadota</taxon>
        <taxon>Gammaproteobacteria</taxon>
        <taxon>Enterobacterales</taxon>
        <taxon>Morganellaceae</taxon>
        <taxon>Proteus</taxon>
    </lineage>
</organism>
<sequence length="565" mass="63057">MELEHESKRPLYIPYAGPILLEFPLLNKGSAFSEEERSTFNLHGLLPEAVETIEEQVERAYRQYLDFKNDNDKHIYLRNIQDTNETLFYRLLESHLTEMMPIIYTPTVGEACEHFSDIYRRARGLFISYPNRANIDDMLQNATKQNVKVIVVTDGERILGLGDQGIGGMGIPIGKLSLYTACGGISPAYTLPVVLDVGTNNPQRLNDPLYMGWRHPRITGDEYNEFVDEFIQAVKRRWPNVLLQFEDFAQKNAMPLLNRYRDELCCFNDDIQGTAAVTLGSLIAASRAAGRQLKDQTVAFLGAGSAGCGIAEQIIAQMKSEGLSDEQARARIFMVDRFGLLTDKLPNLLDFQSKLIQKSETLADWQTETDAISLLEVVKNAKPTILIGVSGQAGLFTEEIIREMHKHCERPTVMPLSNPTSRVEARPEDIINWTDGQALVATGSPFAPVTYKEKVYPIAQCNNSYIFPGIGLGVIASGAKRVTDAMLMVASRALADCSPMAKEGDGPLLPLLADIQQVSRYIAKQVAKEAQVQGVATVTSDSALEEAIERNYWEPEYRIYKRTSF</sequence>
<reference key="1">
    <citation type="journal article" date="2008" name="J. Bacteriol.">
        <title>Complete genome sequence of uropathogenic Proteus mirabilis, a master of both adherence and motility.</title>
        <authorList>
            <person name="Pearson M.M."/>
            <person name="Sebaihia M."/>
            <person name="Churcher C."/>
            <person name="Quail M.A."/>
            <person name="Seshasayee A.S."/>
            <person name="Luscombe N.M."/>
            <person name="Abdellah Z."/>
            <person name="Arrosmith C."/>
            <person name="Atkin B."/>
            <person name="Chillingworth T."/>
            <person name="Hauser H."/>
            <person name="Jagels K."/>
            <person name="Moule S."/>
            <person name="Mungall K."/>
            <person name="Norbertczak H."/>
            <person name="Rabbinowitsch E."/>
            <person name="Walker D."/>
            <person name="Whithead S."/>
            <person name="Thomson N.R."/>
            <person name="Rather P.N."/>
            <person name="Parkhill J."/>
            <person name="Mobley H.L.T."/>
        </authorList>
    </citation>
    <scope>NUCLEOTIDE SEQUENCE [LARGE SCALE GENOMIC DNA]</scope>
    <source>
        <strain>HI4320</strain>
    </source>
</reference>
<name>MAO1_PROMH</name>